<evidence type="ECO:0000255" key="1">
    <source>
        <dbReference type="HAMAP-Rule" id="MF_01351"/>
    </source>
</evidence>
<organism>
    <name type="scientific">Villanova achilleoides</name>
    <name type="common">Unxia achillioides</name>
    <dbReference type="NCBI Taxonomy" id="176589"/>
    <lineage>
        <taxon>Eukaryota</taxon>
        <taxon>Viridiplantae</taxon>
        <taxon>Streptophyta</taxon>
        <taxon>Embryophyta</taxon>
        <taxon>Tracheophyta</taxon>
        <taxon>Spermatophyta</taxon>
        <taxon>Magnoliopsida</taxon>
        <taxon>eudicotyledons</taxon>
        <taxon>Gunneridae</taxon>
        <taxon>Pentapetalae</taxon>
        <taxon>asterids</taxon>
        <taxon>campanulids</taxon>
        <taxon>Asterales</taxon>
        <taxon>Asteraceae</taxon>
        <taxon>Asteroideae</taxon>
        <taxon>Heliantheae alliance</taxon>
        <taxon>Perityleae</taxon>
        <taxon>Villanova</taxon>
    </lineage>
</organism>
<comment type="function">
    <text evidence="1">NDH shuttles electrons from NAD(P)H:plastoquinone, via FMN and iron-sulfur (Fe-S) centers, to quinones in the photosynthetic chain and possibly in a chloroplast respiratory chain. The immediate electron acceptor for the enzyme in this species is believed to be plastoquinone. Couples the redox reaction to proton translocation, and thus conserves the redox energy in a proton gradient.</text>
</comment>
<comment type="catalytic activity">
    <reaction evidence="1">
        <text>a plastoquinone + NADH + (n+1) H(+)(in) = a plastoquinol + NAD(+) + n H(+)(out)</text>
        <dbReference type="Rhea" id="RHEA:42608"/>
        <dbReference type="Rhea" id="RHEA-COMP:9561"/>
        <dbReference type="Rhea" id="RHEA-COMP:9562"/>
        <dbReference type="ChEBI" id="CHEBI:15378"/>
        <dbReference type="ChEBI" id="CHEBI:17757"/>
        <dbReference type="ChEBI" id="CHEBI:57540"/>
        <dbReference type="ChEBI" id="CHEBI:57945"/>
        <dbReference type="ChEBI" id="CHEBI:62192"/>
    </reaction>
</comment>
<comment type="catalytic activity">
    <reaction evidence="1">
        <text>a plastoquinone + NADPH + (n+1) H(+)(in) = a plastoquinol + NADP(+) + n H(+)(out)</text>
        <dbReference type="Rhea" id="RHEA:42612"/>
        <dbReference type="Rhea" id="RHEA-COMP:9561"/>
        <dbReference type="Rhea" id="RHEA-COMP:9562"/>
        <dbReference type="ChEBI" id="CHEBI:15378"/>
        <dbReference type="ChEBI" id="CHEBI:17757"/>
        <dbReference type="ChEBI" id="CHEBI:57783"/>
        <dbReference type="ChEBI" id="CHEBI:58349"/>
        <dbReference type="ChEBI" id="CHEBI:62192"/>
    </reaction>
</comment>
<comment type="cofactor">
    <cofactor evidence="1">
        <name>[4Fe-4S] cluster</name>
        <dbReference type="ChEBI" id="CHEBI:49883"/>
    </cofactor>
    <text evidence="1">Binds 2 [4Fe-4S] clusters per subunit.</text>
</comment>
<comment type="subunit">
    <text evidence="1">NDH is composed of at least 16 different subunits, 5 of which are encoded in the nucleus.</text>
</comment>
<comment type="subcellular location">
    <subcellularLocation>
        <location evidence="1">Plastid</location>
        <location evidence="1">Chloroplast thylakoid membrane</location>
        <topology evidence="1">Peripheral membrane protein</topology>
    </subcellularLocation>
</comment>
<comment type="similarity">
    <text evidence="1">Belongs to the complex I 23 kDa subunit family.</text>
</comment>
<geneLocation type="chloroplast"/>
<accession>Q8HVJ4</accession>
<sequence length="166" mass="19475">MFPMVTEFMNYGQQTVRAARYIGQGFMITLSHANRLPVTIQYPYEKLITSERFRGRIHFEFDKCIACEVCVRVCPIDLPVVDWKLETDIRKKRLLNYSIDFGICIFCGNCVEYCPTNCLSMTEEYELSTYDRHELNYNQIALGRLPMSIIDDYTIRTILNLPEIKT</sequence>
<gene>
    <name evidence="1" type="primary">ndhI</name>
</gene>
<protein>
    <recommendedName>
        <fullName evidence="1">NAD(P)H-quinone oxidoreductase subunit I, chloroplastic</fullName>
        <ecNumber evidence="1">7.1.1.-</ecNumber>
    </recommendedName>
    <alternativeName>
        <fullName evidence="1">NAD(P)H dehydrogenase subunit I</fullName>
        <shortName evidence="1">NDH subunit I</shortName>
    </alternativeName>
    <alternativeName>
        <fullName evidence="1">NADH-plastoquinone oxidoreductase subunit I</fullName>
    </alternativeName>
</protein>
<keyword id="KW-0004">4Fe-4S</keyword>
<keyword id="KW-0150">Chloroplast</keyword>
<keyword id="KW-0408">Iron</keyword>
<keyword id="KW-0411">Iron-sulfur</keyword>
<keyword id="KW-0472">Membrane</keyword>
<keyword id="KW-0479">Metal-binding</keyword>
<keyword id="KW-0520">NAD</keyword>
<keyword id="KW-0521">NADP</keyword>
<keyword id="KW-0934">Plastid</keyword>
<keyword id="KW-0618">Plastoquinone</keyword>
<keyword id="KW-0874">Quinone</keyword>
<keyword id="KW-0677">Repeat</keyword>
<keyword id="KW-0793">Thylakoid</keyword>
<keyword id="KW-1278">Translocase</keyword>
<dbReference type="EC" id="7.1.1.-" evidence="1"/>
<dbReference type="EMBL" id="AF383869">
    <property type="protein sequence ID" value="AAN61810.1"/>
    <property type="molecule type" value="Genomic_DNA"/>
</dbReference>
<dbReference type="SMR" id="Q8HVJ4"/>
<dbReference type="GO" id="GO:0009535">
    <property type="term" value="C:chloroplast thylakoid membrane"/>
    <property type="evidence" value="ECO:0007669"/>
    <property type="project" value="UniProtKB-SubCell"/>
</dbReference>
<dbReference type="GO" id="GO:0051539">
    <property type="term" value="F:4 iron, 4 sulfur cluster binding"/>
    <property type="evidence" value="ECO:0007669"/>
    <property type="project" value="UniProtKB-KW"/>
</dbReference>
<dbReference type="GO" id="GO:0005506">
    <property type="term" value="F:iron ion binding"/>
    <property type="evidence" value="ECO:0007669"/>
    <property type="project" value="UniProtKB-UniRule"/>
</dbReference>
<dbReference type="GO" id="GO:0008137">
    <property type="term" value="F:NADH dehydrogenase (ubiquinone) activity"/>
    <property type="evidence" value="ECO:0007669"/>
    <property type="project" value="InterPro"/>
</dbReference>
<dbReference type="GO" id="GO:0048038">
    <property type="term" value="F:quinone binding"/>
    <property type="evidence" value="ECO:0007669"/>
    <property type="project" value="UniProtKB-KW"/>
</dbReference>
<dbReference type="GO" id="GO:0019684">
    <property type="term" value="P:photosynthesis, light reaction"/>
    <property type="evidence" value="ECO:0007669"/>
    <property type="project" value="UniProtKB-UniRule"/>
</dbReference>
<dbReference type="FunFam" id="3.30.70.3270:FF:000006">
    <property type="entry name" value="NAD(P)H-quinone oxidoreductase subunit I, chloroplastic"/>
    <property type="match status" value="1"/>
</dbReference>
<dbReference type="Gene3D" id="3.30.70.3270">
    <property type="match status" value="1"/>
</dbReference>
<dbReference type="HAMAP" id="MF_01351">
    <property type="entry name" value="NDH1_NuoI"/>
    <property type="match status" value="1"/>
</dbReference>
<dbReference type="InterPro" id="IPR017896">
    <property type="entry name" value="4Fe4S_Fe-S-bd"/>
</dbReference>
<dbReference type="InterPro" id="IPR017900">
    <property type="entry name" value="4Fe4S_Fe_S_CS"/>
</dbReference>
<dbReference type="InterPro" id="IPR010226">
    <property type="entry name" value="NADH_quinone_OxRdtase_chainI"/>
</dbReference>
<dbReference type="InterPro" id="IPR004497">
    <property type="entry name" value="NDHI"/>
</dbReference>
<dbReference type="NCBIfam" id="TIGR00403">
    <property type="entry name" value="ndhI"/>
    <property type="match status" value="1"/>
</dbReference>
<dbReference type="NCBIfam" id="TIGR01971">
    <property type="entry name" value="NuoI"/>
    <property type="match status" value="1"/>
</dbReference>
<dbReference type="NCBIfam" id="NF004537">
    <property type="entry name" value="PRK05888.1-3"/>
    <property type="match status" value="1"/>
</dbReference>
<dbReference type="PANTHER" id="PTHR47275">
    <property type="entry name" value="NAD(P)H-QUINONE OXIDOREDUCTASE SUBUNIT I, CHLOROPLASTIC"/>
    <property type="match status" value="1"/>
</dbReference>
<dbReference type="PANTHER" id="PTHR47275:SF1">
    <property type="entry name" value="NAD(P)H-QUINONE OXIDOREDUCTASE SUBUNIT I, CHLOROPLASTIC"/>
    <property type="match status" value="1"/>
</dbReference>
<dbReference type="Pfam" id="PF00037">
    <property type="entry name" value="Fer4"/>
    <property type="match status" value="2"/>
</dbReference>
<dbReference type="SUPFAM" id="SSF54862">
    <property type="entry name" value="4Fe-4S ferredoxins"/>
    <property type="match status" value="1"/>
</dbReference>
<dbReference type="PROSITE" id="PS00198">
    <property type="entry name" value="4FE4S_FER_1"/>
    <property type="match status" value="2"/>
</dbReference>
<dbReference type="PROSITE" id="PS51379">
    <property type="entry name" value="4FE4S_FER_2"/>
    <property type="match status" value="2"/>
</dbReference>
<proteinExistence type="inferred from homology"/>
<feature type="chain" id="PRO_0000250865" description="NAD(P)H-quinone oxidoreductase subunit I, chloroplastic">
    <location>
        <begin position="1"/>
        <end position="166"/>
    </location>
</feature>
<feature type="domain" description="4Fe-4S ferredoxin-type 1" evidence="1">
    <location>
        <begin position="55"/>
        <end position="84"/>
    </location>
</feature>
<feature type="domain" description="4Fe-4S ferredoxin-type 2" evidence="1">
    <location>
        <begin position="95"/>
        <end position="124"/>
    </location>
</feature>
<feature type="binding site" evidence="1">
    <location>
        <position position="64"/>
    </location>
    <ligand>
        <name>[4Fe-4S] cluster</name>
        <dbReference type="ChEBI" id="CHEBI:49883"/>
        <label>1</label>
    </ligand>
</feature>
<feature type="binding site" evidence="1">
    <location>
        <position position="67"/>
    </location>
    <ligand>
        <name>[4Fe-4S] cluster</name>
        <dbReference type="ChEBI" id="CHEBI:49883"/>
        <label>1</label>
    </ligand>
</feature>
<feature type="binding site" evidence="1">
    <location>
        <position position="70"/>
    </location>
    <ligand>
        <name>[4Fe-4S] cluster</name>
        <dbReference type="ChEBI" id="CHEBI:49883"/>
        <label>1</label>
    </ligand>
</feature>
<feature type="binding site" evidence="1">
    <location>
        <position position="74"/>
    </location>
    <ligand>
        <name>[4Fe-4S] cluster</name>
        <dbReference type="ChEBI" id="CHEBI:49883"/>
        <label>2</label>
    </ligand>
</feature>
<feature type="binding site" evidence="1">
    <location>
        <position position="104"/>
    </location>
    <ligand>
        <name>[4Fe-4S] cluster</name>
        <dbReference type="ChEBI" id="CHEBI:49883"/>
        <label>2</label>
    </ligand>
</feature>
<feature type="binding site" evidence="1">
    <location>
        <position position="107"/>
    </location>
    <ligand>
        <name>[4Fe-4S] cluster</name>
        <dbReference type="ChEBI" id="CHEBI:49883"/>
        <label>2</label>
    </ligand>
</feature>
<feature type="binding site" evidence="1">
    <location>
        <position position="110"/>
    </location>
    <ligand>
        <name>[4Fe-4S] cluster</name>
        <dbReference type="ChEBI" id="CHEBI:49883"/>
        <label>2</label>
    </ligand>
</feature>
<feature type="binding site" evidence="1">
    <location>
        <position position="114"/>
    </location>
    <ligand>
        <name>[4Fe-4S] cluster</name>
        <dbReference type="ChEBI" id="CHEBI:49883"/>
        <label>1</label>
    </ligand>
</feature>
<reference key="1">
    <citation type="submission" date="2003-01" db="EMBL/GenBank/DDBJ databases">
        <title>Chloroplast DNA phylogeny of tribe Heliantheae (Asteraceae).</title>
        <authorList>
            <person name="Panero J.L."/>
            <person name="Baldwin B.G."/>
            <person name="Schilling E.E."/>
            <person name="Clevinger J.A."/>
        </authorList>
    </citation>
    <scope>NUCLEOTIDE SEQUENCE [GENOMIC DNA]</scope>
</reference>
<name>NDHI_VILAC</name>